<proteinExistence type="evidence at transcript level"/>
<gene>
    <name type="ordered locus">Os03g0232800</name>
    <name type="ordered locus">LOC_Os03g13030</name>
    <name type="ORF">OJ1175C11.13</name>
</gene>
<organism>
    <name type="scientific">Oryza sativa subsp. japonica</name>
    <name type="common">Rice</name>
    <dbReference type="NCBI Taxonomy" id="39947"/>
    <lineage>
        <taxon>Eukaryota</taxon>
        <taxon>Viridiplantae</taxon>
        <taxon>Streptophyta</taxon>
        <taxon>Embryophyta</taxon>
        <taxon>Tracheophyta</taxon>
        <taxon>Spermatophyta</taxon>
        <taxon>Magnoliopsida</taxon>
        <taxon>Liliopsida</taxon>
        <taxon>Poales</taxon>
        <taxon>Poaceae</taxon>
        <taxon>BOP clade</taxon>
        <taxon>Oryzoideae</taxon>
        <taxon>Oryzeae</taxon>
        <taxon>Oryzinae</taxon>
        <taxon>Oryza</taxon>
        <taxon>Oryza sativa</taxon>
    </lineage>
</organism>
<evidence type="ECO:0000250" key="1"/>
<evidence type="ECO:0000255" key="2"/>
<evidence type="ECO:0000303" key="3">
    <source>
    </source>
</evidence>
<evidence type="ECO:0000305" key="4"/>
<feature type="chain" id="PRO_0000430055" description="Lecithin-cholesterol acyltransferase-like 1">
    <location>
        <begin position="1"/>
        <end position="434"/>
    </location>
</feature>
<feature type="active site" description="Acyl-ester intermediate" evidence="2">
    <location>
        <position position="191"/>
    </location>
</feature>
<feature type="active site" description="Charge relay system" evidence="1">
    <location>
        <position position="354"/>
    </location>
</feature>
<feature type="active site" description="Charge relay system" evidence="1">
    <location>
        <position position="386"/>
    </location>
</feature>
<feature type="splice variant" id="VSP_055462" description="In isoform 2." evidence="3">
    <location>
        <begin position="411"/>
        <end position="434"/>
    </location>
</feature>
<sequence length="434" mass="46954">MDLLRRVAVVAVLLSLPSRGRSGGGGSDLHPVVLVPGYGSNRLYARLTAAYEPAAPRCGAREGKDEWFQLWPIDAAASEPAQAPCLAEKMSLVYDPVADDYRNVAGVVTRVPSFASTRALVGWDPLVRQLEAMGHRDGGSLFAAPYDFRYAVAPRGHPSAVGERYFARLTRLIERASRLNGGRPAVVVAHSFGCALTYQFLRARPLAWRQRFVKHAVLLAAALGGFAEGMDGLASGAGSGLPNLAPPARARLARSQQSALWRLPTPMVFGDRPVVVTKNSTYSANNITEFLDAIGFTEGVQPYVTRVLPMWRALPAPMVPVTSMYGVGVRTPETFVYGEAGFEGTPEVVYGDGDGNMNIVSLMAAEEWSGVEGQILKVVRLPGVSHVGFFSDLALKKVVAEIQKAVSSIEVHRKEKIFSFLNNFEFTIPVPLGW</sequence>
<comment type="alternative products">
    <event type="alternative splicing"/>
    <isoform>
        <id>Q10PI6-1</id>
        <name>1</name>
        <sequence type="displayed"/>
    </isoform>
    <isoform>
        <id>Q10PI6-2</id>
        <name>2</name>
        <sequence type="described" ref="VSP_055462"/>
    </isoform>
</comment>
<comment type="similarity">
    <text evidence="4">Belongs to the AB hydrolase superfamily. Lipase family.</text>
</comment>
<comment type="sequence caution" evidence="4">
    <conflict type="erroneous gene model prediction">
        <sequence resource="EMBL-CDS" id="AAM19133"/>
    </conflict>
    <text>The predicted gene has been split into 2 genes: Os03g0232800 and Os03g0232900.</text>
</comment>
<comment type="sequence caution" evidence="4">
    <conflict type="erroneous initiation">
        <sequence resource="EMBL-CDS" id="BAF11384"/>
    </conflict>
    <text>Extended N-terminus.</text>
</comment>
<comment type="sequence caution" evidence="4">
    <conflict type="erroneous translation">
        <sequence resource="EMBL-CDS" id="BAG87533"/>
    </conflict>
    <text>Wrong choice of CDS.</text>
</comment>
<comment type="sequence caution" evidence="4">
    <conflict type="erroneous translation">
        <sequence resource="EMBL-CDS" id="BAH00268"/>
    </conflict>
    <text>Wrong choice of CDS.</text>
</comment>
<reference key="1">
    <citation type="journal article" date="2005" name="Genome Res.">
        <title>Sequence, annotation, and analysis of synteny between rice chromosome 3 and diverged grass species.</title>
        <authorList>
            <consortium name="The rice chromosome 3 sequencing consortium"/>
            <person name="Buell C.R."/>
            <person name="Yuan Q."/>
            <person name="Ouyang S."/>
            <person name="Liu J."/>
            <person name="Zhu W."/>
            <person name="Wang A."/>
            <person name="Maiti R."/>
            <person name="Haas B."/>
            <person name="Wortman J."/>
            <person name="Pertea M."/>
            <person name="Jones K.M."/>
            <person name="Kim M."/>
            <person name="Overton L."/>
            <person name="Tsitrin T."/>
            <person name="Fadrosh D."/>
            <person name="Bera J."/>
            <person name="Weaver B."/>
            <person name="Jin S."/>
            <person name="Johri S."/>
            <person name="Reardon M."/>
            <person name="Webb K."/>
            <person name="Hill J."/>
            <person name="Moffat K."/>
            <person name="Tallon L."/>
            <person name="Van Aken S."/>
            <person name="Lewis M."/>
            <person name="Utterback T."/>
            <person name="Feldblyum T."/>
            <person name="Zismann V."/>
            <person name="Iobst S."/>
            <person name="Hsiao J."/>
            <person name="de Vazeille A.R."/>
            <person name="Salzberg S.L."/>
            <person name="White O."/>
            <person name="Fraser C.M."/>
            <person name="Yu Y."/>
            <person name="Kim H."/>
            <person name="Rambo T."/>
            <person name="Currie J."/>
            <person name="Collura K."/>
            <person name="Kernodle-Thompson S."/>
            <person name="Wei F."/>
            <person name="Kudrna K."/>
            <person name="Ammiraju J.S.S."/>
            <person name="Luo M."/>
            <person name="Goicoechea J.L."/>
            <person name="Wing R.A."/>
            <person name="Henry D."/>
            <person name="Oates R."/>
            <person name="Palmer M."/>
            <person name="Pries G."/>
            <person name="Saski C."/>
            <person name="Simmons J."/>
            <person name="Soderlund C."/>
            <person name="Nelson W."/>
            <person name="de la Bastide M."/>
            <person name="Spiegel L."/>
            <person name="Nascimento L."/>
            <person name="Huang E."/>
            <person name="Preston R."/>
            <person name="Zutavern T."/>
            <person name="Palmer L."/>
            <person name="O'Shaughnessy A."/>
            <person name="Dike S."/>
            <person name="McCombie W.R."/>
            <person name="Minx P."/>
            <person name="Cordum H."/>
            <person name="Wilson R."/>
            <person name="Jin W."/>
            <person name="Lee H.R."/>
            <person name="Jiang J."/>
            <person name="Jackson S."/>
        </authorList>
    </citation>
    <scope>NUCLEOTIDE SEQUENCE [LARGE SCALE GENOMIC DNA]</scope>
    <source>
        <strain>cv. Nipponbare</strain>
    </source>
</reference>
<reference key="2">
    <citation type="journal article" date="2005" name="Nature">
        <title>The map-based sequence of the rice genome.</title>
        <authorList>
            <consortium name="International rice genome sequencing project (IRGSP)"/>
        </authorList>
    </citation>
    <scope>NUCLEOTIDE SEQUENCE [LARGE SCALE GENOMIC DNA]</scope>
    <source>
        <strain>cv. Nipponbare</strain>
    </source>
</reference>
<reference key="3">
    <citation type="journal article" date="2008" name="Nucleic Acids Res.">
        <title>The rice annotation project database (RAP-DB): 2008 update.</title>
        <authorList>
            <consortium name="The rice annotation project (RAP)"/>
        </authorList>
    </citation>
    <scope>GENOME REANNOTATION</scope>
    <source>
        <strain>cv. Nipponbare</strain>
    </source>
</reference>
<reference key="4">
    <citation type="journal article" date="2013" name="Rice">
        <title>Improvement of the Oryza sativa Nipponbare reference genome using next generation sequence and optical map data.</title>
        <authorList>
            <person name="Kawahara Y."/>
            <person name="de la Bastide M."/>
            <person name="Hamilton J.P."/>
            <person name="Kanamori H."/>
            <person name="McCombie W.R."/>
            <person name="Ouyang S."/>
            <person name="Schwartz D.C."/>
            <person name="Tanaka T."/>
            <person name="Wu J."/>
            <person name="Zhou S."/>
            <person name="Childs K.L."/>
            <person name="Davidson R.M."/>
            <person name="Lin H."/>
            <person name="Quesada-Ocampo L."/>
            <person name="Vaillancourt B."/>
            <person name="Sakai H."/>
            <person name="Lee S.S."/>
            <person name="Kim J."/>
            <person name="Numa H."/>
            <person name="Itoh T."/>
            <person name="Buell C.R."/>
            <person name="Matsumoto T."/>
        </authorList>
    </citation>
    <scope>GENOME REANNOTATION</scope>
    <source>
        <strain>cv. Nipponbare</strain>
    </source>
</reference>
<reference key="5">
    <citation type="journal article" date="2003" name="Science">
        <title>Collection, mapping, and annotation of over 28,000 cDNA clones from japonica rice.</title>
        <authorList>
            <consortium name="The rice full-length cDNA consortium"/>
        </authorList>
    </citation>
    <scope>NUCLEOTIDE SEQUENCE [LARGE SCALE MRNA] (ISOFORMS 1 AND 2)</scope>
    <source>
        <strain>cv. Nipponbare</strain>
    </source>
</reference>
<accession>Q10PI6</accession>
<accession>A0A0P0VVA7</accession>
<accession>B7E586</accession>
<accession>Q0DTQ4</accession>
<accession>Q10PI7</accession>
<accession>Q8S5X5</accession>
<name>LCAT1_ORYSJ</name>
<keyword id="KW-0012">Acyltransferase</keyword>
<keyword id="KW-0025">Alternative splicing</keyword>
<keyword id="KW-1185">Reference proteome</keyword>
<keyword id="KW-0808">Transferase</keyword>
<protein>
    <recommendedName>
        <fullName>Lecithin-cholesterol acyltransferase-like 1</fullName>
        <ecNumber>2.3.1.-</ecNumber>
    </recommendedName>
</protein>
<dbReference type="EC" id="2.3.1.-"/>
<dbReference type="EMBL" id="AC103891">
    <property type="protein sequence ID" value="AAM19133.1"/>
    <property type="status" value="ALT_SEQ"/>
    <property type="molecule type" value="Genomic_DNA"/>
</dbReference>
<dbReference type="EMBL" id="DP000009">
    <property type="protein sequence ID" value="ABF94809.1"/>
    <property type="molecule type" value="Genomic_DNA"/>
</dbReference>
<dbReference type="EMBL" id="DP000009">
    <property type="protein sequence ID" value="ABF94810.1"/>
    <property type="molecule type" value="Genomic_DNA"/>
</dbReference>
<dbReference type="EMBL" id="AP008209">
    <property type="protein sequence ID" value="BAF11384.1"/>
    <property type="status" value="ALT_INIT"/>
    <property type="molecule type" value="Genomic_DNA"/>
</dbReference>
<dbReference type="EMBL" id="AP014959">
    <property type="protein sequence ID" value="BAS83121.1"/>
    <property type="molecule type" value="Genomic_DNA"/>
</dbReference>
<dbReference type="EMBL" id="AP014959">
    <property type="protein sequence ID" value="BAS83122.1"/>
    <property type="molecule type" value="Genomic_DNA"/>
</dbReference>
<dbReference type="EMBL" id="AK060669">
    <property type="protein sequence ID" value="BAG87533.1"/>
    <property type="status" value="ALT_SEQ"/>
    <property type="molecule type" value="mRNA"/>
</dbReference>
<dbReference type="EMBL" id="AK072207">
    <property type="protein sequence ID" value="BAG92871.1"/>
    <property type="molecule type" value="mRNA"/>
</dbReference>
<dbReference type="EMBL" id="AK121004">
    <property type="protein sequence ID" value="BAH00268.1"/>
    <property type="status" value="ALT_SEQ"/>
    <property type="molecule type" value="mRNA"/>
</dbReference>
<dbReference type="RefSeq" id="XP_015628714.1">
    <property type="nucleotide sequence ID" value="XM_015773228.1"/>
</dbReference>
<dbReference type="RefSeq" id="XP_015628715.1">
    <property type="nucleotide sequence ID" value="XM_015773229.1"/>
</dbReference>
<dbReference type="SMR" id="Q10PI6"/>
<dbReference type="FunCoup" id="Q10PI6">
    <property type="interactions" value="181"/>
</dbReference>
<dbReference type="STRING" id="39947.Q10PI6"/>
<dbReference type="ESTHER" id="orysa-Q8S5X5">
    <property type="family name" value="PC-sterol_acyltransferase"/>
</dbReference>
<dbReference type="PaxDb" id="39947-Q10PI6"/>
<dbReference type="EnsemblPlants" id="Os03t0232800-02">
    <molecule id="Q10PI6-1"/>
    <property type="protein sequence ID" value="Os03t0232800-02"/>
    <property type="gene ID" value="Os03g0232800"/>
</dbReference>
<dbReference type="Gramene" id="Os03t0232800-02">
    <molecule id="Q10PI6-1"/>
    <property type="protein sequence ID" value="Os03t0232800-02"/>
    <property type="gene ID" value="Os03g0232800"/>
</dbReference>
<dbReference type="KEGG" id="dosa:Os03g0232800"/>
<dbReference type="eggNOG" id="KOG2369">
    <property type="taxonomic scope" value="Eukaryota"/>
</dbReference>
<dbReference type="InParanoid" id="Q10PI6"/>
<dbReference type="OMA" id="LHCLYGD"/>
<dbReference type="OrthoDB" id="190846at2759"/>
<dbReference type="Proteomes" id="UP000000763">
    <property type="component" value="Chromosome 3"/>
</dbReference>
<dbReference type="Proteomes" id="UP000059680">
    <property type="component" value="Chromosome 3"/>
</dbReference>
<dbReference type="GO" id="GO:0008374">
    <property type="term" value="F:O-acyltransferase activity"/>
    <property type="evidence" value="ECO:0007669"/>
    <property type="project" value="InterPro"/>
</dbReference>
<dbReference type="GO" id="GO:0006629">
    <property type="term" value="P:lipid metabolic process"/>
    <property type="evidence" value="ECO:0000318"/>
    <property type="project" value="GO_Central"/>
</dbReference>
<dbReference type="Gene3D" id="3.40.50.1820">
    <property type="entry name" value="alpha/beta hydrolase"/>
    <property type="match status" value="1"/>
</dbReference>
<dbReference type="InterPro" id="IPR029058">
    <property type="entry name" value="AB_hydrolase_fold"/>
</dbReference>
<dbReference type="InterPro" id="IPR003386">
    <property type="entry name" value="LACT/PDAT_acylTrfase"/>
</dbReference>
<dbReference type="PANTHER" id="PTHR11440">
    <property type="entry name" value="LECITHIN-CHOLESTEROL ACYLTRANSFERASE-RELATED"/>
    <property type="match status" value="1"/>
</dbReference>
<dbReference type="Pfam" id="PF02450">
    <property type="entry name" value="LCAT"/>
    <property type="match status" value="1"/>
</dbReference>
<dbReference type="SUPFAM" id="SSF53474">
    <property type="entry name" value="alpha/beta-Hydrolases"/>
    <property type="match status" value="1"/>
</dbReference>